<feature type="initiator methionine" description="Removed" evidence="1">
    <location>
        <position position="1"/>
    </location>
</feature>
<feature type="chain" id="PRO_0000371642" description="Small ribosomal subunit protein uS2">
    <location>
        <begin position="2"/>
        <end position="261"/>
    </location>
</feature>
<feature type="region of interest" description="Disordered" evidence="2">
    <location>
        <begin position="215"/>
        <end position="261"/>
    </location>
</feature>
<feature type="compositionally biased region" description="Acidic residues" evidence="2">
    <location>
        <begin position="223"/>
        <end position="244"/>
    </location>
</feature>
<feature type="modified residue" description="N-acetylserine" evidence="1">
    <location>
        <position position="2"/>
    </location>
</feature>
<gene>
    <name evidence="1" type="primary">RPS0</name>
    <name type="ORF">PICST_76999</name>
</gene>
<proteinExistence type="inferred from homology"/>
<evidence type="ECO:0000255" key="1">
    <source>
        <dbReference type="HAMAP-Rule" id="MF_03015"/>
    </source>
</evidence>
<evidence type="ECO:0000256" key="2">
    <source>
        <dbReference type="SAM" id="MobiDB-lite"/>
    </source>
</evidence>
<evidence type="ECO:0000305" key="3"/>
<accession>A3LRZ0</accession>
<comment type="function">
    <text evidence="1">Required for the assembly and/or stability of the 40S ribosomal subunit. Required for the processing of the 20S rRNA-precursor to mature 18S rRNA in a late step of the maturation of 40S ribosomal subunits.</text>
</comment>
<comment type="subunit">
    <text evidence="1">Component of the small ribosomal subunit. Mature ribosomes consist of a small (40S) and a large (60S) subunit. The 40S subunit contains about 33 different proteins and 1 molecule of RNA (18S). The 60S subunit contains about 49 different proteins and 3 molecules of RNA (25S, 5.8S and 5S). Interacts with RPS21.</text>
</comment>
<comment type="subcellular location">
    <subcellularLocation>
        <location evidence="1">Cytoplasm</location>
    </subcellularLocation>
</comment>
<comment type="similarity">
    <text evidence="1">Belongs to the universal ribosomal protein uS2 family.</text>
</comment>
<keyword id="KW-0007">Acetylation</keyword>
<keyword id="KW-0963">Cytoplasm</keyword>
<keyword id="KW-1185">Reference proteome</keyword>
<keyword id="KW-0687">Ribonucleoprotein</keyword>
<keyword id="KW-0689">Ribosomal protein</keyword>
<sequence>MSLPASFDLTPEDAKLLLAANVHLGSKNVQVHNKPYVYKTRPDGVNVINIGKTWEKIVLAARIIAAVPNPSDVAVCSSRTFGQRAVLKFAAHTGATPIAGRFTPGNFTNYITRSFKEPRLVVVTDPRTDAQAIKESSYVNIPVIALTDMDSPSEYVDVAIPCNNKGKHSIGLIWWLIAREVLRLRGIIPDRTTEWSVMPDLYFYRDPEEIEQNAAEEAKTTEDVEEAAPVDADEWTGETEEVDWAESGATPAVEDAAASNW</sequence>
<organism>
    <name type="scientific">Scheffersomyces stipitis (strain ATCC 58785 / CBS 6054 / NBRC 10063 / NRRL Y-11545)</name>
    <name type="common">Yeast</name>
    <name type="synonym">Pichia stipitis</name>
    <dbReference type="NCBI Taxonomy" id="322104"/>
    <lineage>
        <taxon>Eukaryota</taxon>
        <taxon>Fungi</taxon>
        <taxon>Dikarya</taxon>
        <taxon>Ascomycota</taxon>
        <taxon>Saccharomycotina</taxon>
        <taxon>Pichiomycetes</taxon>
        <taxon>Debaryomycetaceae</taxon>
        <taxon>Scheffersomyces</taxon>
    </lineage>
</organism>
<name>RSSA_PICST</name>
<reference key="1">
    <citation type="journal article" date="2007" name="Nat. Biotechnol.">
        <title>Genome sequence of the lignocellulose-bioconverting and xylose-fermenting yeast Pichia stipitis.</title>
        <authorList>
            <person name="Jeffries T.W."/>
            <person name="Grigoriev I.V."/>
            <person name="Grimwood J."/>
            <person name="Laplaza J.M."/>
            <person name="Aerts A."/>
            <person name="Salamov A."/>
            <person name="Schmutz J."/>
            <person name="Lindquist E."/>
            <person name="Dehal P."/>
            <person name="Shapiro H."/>
            <person name="Jin Y.-S."/>
            <person name="Passoth V."/>
            <person name="Richardson P.M."/>
        </authorList>
    </citation>
    <scope>NUCLEOTIDE SEQUENCE [LARGE SCALE GENOMIC DNA]</scope>
    <source>
        <strain>ATCC 58785 / CBS 6054 / NBRC 10063 / NRRL Y-11545</strain>
    </source>
</reference>
<protein>
    <recommendedName>
        <fullName evidence="1">Small ribosomal subunit protein uS2</fullName>
    </recommendedName>
    <alternativeName>
        <fullName evidence="3">40S ribosomal protein S0</fullName>
    </alternativeName>
</protein>
<dbReference type="EMBL" id="CP000497">
    <property type="protein sequence ID" value="ABN65470.1"/>
    <property type="molecule type" value="Genomic_DNA"/>
</dbReference>
<dbReference type="SMR" id="A3LRZ0"/>
<dbReference type="FunCoup" id="A3LRZ0">
    <property type="interactions" value="1371"/>
</dbReference>
<dbReference type="STRING" id="322104.A3LRZ0"/>
<dbReference type="KEGG" id="pic:PICST_76999"/>
<dbReference type="eggNOG" id="KOG0830">
    <property type="taxonomic scope" value="Eukaryota"/>
</dbReference>
<dbReference type="HOGENOM" id="CLU_058171_0_1_1"/>
<dbReference type="InParanoid" id="A3LRZ0"/>
<dbReference type="OMA" id="VKNFFEP"/>
<dbReference type="OrthoDB" id="414863at2759"/>
<dbReference type="Proteomes" id="UP000002258">
    <property type="component" value="Chromosome 3"/>
</dbReference>
<dbReference type="GO" id="GO:0022627">
    <property type="term" value="C:cytosolic small ribosomal subunit"/>
    <property type="evidence" value="ECO:0007669"/>
    <property type="project" value="UniProtKB-UniRule"/>
</dbReference>
<dbReference type="GO" id="GO:0003735">
    <property type="term" value="F:structural constituent of ribosome"/>
    <property type="evidence" value="ECO:0007669"/>
    <property type="project" value="UniProtKB-UniRule"/>
</dbReference>
<dbReference type="GO" id="GO:0000028">
    <property type="term" value="P:ribosomal small subunit assembly"/>
    <property type="evidence" value="ECO:0007669"/>
    <property type="project" value="UniProtKB-UniRule"/>
</dbReference>
<dbReference type="GO" id="GO:0006412">
    <property type="term" value="P:translation"/>
    <property type="evidence" value="ECO:0007669"/>
    <property type="project" value="UniProtKB-UniRule"/>
</dbReference>
<dbReference type="CDD" id="cd01425">
    <property type="entry name" value="RPS2"/>
    <property type="match status" value="1"/>
</dbReference>
<dbReference type="FunFam" id="3.40.50.10490:FF:000010">
    <property type="entry name" value="40S ribosomal protein S0"/>
    <property type="match status" value="1"/>
</dbReference>
<dbReference type="Gene3D" id="3.40.50.10490">
    <property type="entry name" value="Glucose-6-phosphate isomerase like protein, domain 1"/>
    <property type="match status" value="1"/>
</dbReference>
<dbReference type="HAMAP" id="MF_03015">
    <property type="entry name" value="Ribosomal_S2_euk"/>
    <property type="match status" value="1"/>
</dbReference>
<dbReference type="InterPro" id="IPR001865">
    <property type="entry name" value="Ribosomal_uS2"/>
</dbReference>
<dbReference type="InterPro" id="IPR032281">
    <property type="entry name" value="Ribosomal_uS2_C"/>
</dbReference>
<dbReference type="InterPro" id="IPR018130">
    <property type="entry name" value="Ribosomal_uS2_CS"/>
</dbReference>
<dbReference type="InterPro" id="IPR027498">
    <property type="entry name" value="Ribosomal_uS2_euk"/>
</dbReference>
<dbReference type="InterPro" id="IPR005707">
    <property type="entry name" value="Ribosomal_uS2_euk/arc"/>
</dbReference>
<dbReference type="InterPro" id="IPR023591">
    <property type="entry name" value="Ribosomal_uS2_flav_dom_sf"/>
</dbReference>
<dbReference type="NCBIfam" id="TIGR01012">
    <property type="entry name" value="uS2_euk_arch"/>
    <property type="match status" value="1"/>
</dbReference>
<dbReference type="PANTHER" id="PTHR11489">
    <property type="entry name" value="40S RIBOSOMAL PROTEIN SA"/>
    <property type="match status" value="1"/>
</dbReference>
<dbReference type="Pfam" id="PF16122">
    <property type="entry name" value="40S_SA_C"/>
    <property type="match status" value="1"/>
</dbReference>
<dbReference type="Pfam" id="PF00318">
    <property type="entry name" value="Ribosomal_S2"/>
    <property type="match status" value="2"/>
</dbReference>
<dbReference type="PRINTS" id="PR00395">
    <property type="entry name" value="RIBOSOMALS2"/>
</dbReference>
<dbReference type="SUPFAM" id="SSF52313">
    <property type="entry name" value="Ribosomal protein S2"/>
    <property type="match status" value="1"/>
</dbReference>
<dbReference type="PROSITE" id="PS00962">
    <property type="entry name" value="RIBOSOMAL_S2_1"/>
    <property type="match status" value="1"/>
</dbReference>
<dbReference type="PROSITE" id="PS00963">
    <property type="entry name" value="RIBOSOMAL_S2_2"/>
    <property type="match status" value="1"/>
</dbReference>